<comment type="function">
    <text evidence="1">Redox regulated molecular chaperone. Protects both thermally unfolding and oxidatively damaged proteins from irreversible aggregation. Plays an important role in the bacterial defense system toward oxidative stress.</text>
</comment>
<comment type="subcellular location">
    <subcellularLocation>
        <location evidence="1">Cytoplasm</location>
    </subcellularLocation>
</comment>
<comment type="PTM">
    <text evidence="1">Under oxidizing conditions two disulfide bonds are formed involving the reactive cysteines. Under reducing conditions zinc is bound to the reactive cysteines and the protein is inactive.</text>
</comment>
<comment type="similarity">
    <text evidence="1">Belongs to the HSP33 family.</text>
</comment>
<protein>
    <recommendedName>
        <fullName evidence="1">33 kDa chaperonin</fullName>
    </recommendedName>
    <alternativeName>
        <fullName evidence="1">Heat shock protein 33 homolog</fullName>
        <shortName evidence="1">HSP33</shortName>
    </alternativeName>
</protein>
<evidence type="ECO:0000255" key="1">
    <source>
        <dbReference type="HAMAP-Rule" id="MF_00117"/>
    </source>
</evidence>
<feature type="chain" id="PRO_1000095033" description="33 kDa chaperonin">
    <location>
        <begin position="1"/>
        <end position="290"/>
    </location>
</feature>
<feature type="disulfide bond" description="Redox-active" evidence="1">
    <location>
        <begin position="235"/>
        <end position="237"/>
    </location>
</feature>
<feature type="disulfide bond" description="Redox-active" evidence="1">
    <location>
        <begin position="268"/>
        <end position="271"/>
    </location>
</feature>
<sequence length="290" mass="31663">MDKIIKTISESGAFRAFVLDSTETVRTAQEKHQTQASSTVALGRTLIASQILAANEKGNTKLTVKVLGSSSLGAIITVADTKGNVKGYVQNPGVDIKKTATGEVLVGPFVGNGQFLVITDYGTGNPYNSITPLISGEIGEDLAFYLTESQQTPSAVGLNVLLDEEDKVKVAGGFLVQVLPGAKKEEIARFEKRIQEMPAISTLLESDDHIEALLKAIYGDEAYKRLSEEEIRFQCDCSHERFMNALASLPSSDLQEMKEEDHGAEITCQFCQTTYNFDEKDLEELIRDKS</sequence>
<gene>
    <name evidence="1" type="primary">hslO</name>
    <name type="ordered locus">SPH_2383</name>
</gene>
<keyword id="KW-0143">Chaperone</keyword>
<keyword id="KW-0963">Cytoplasm</keyword>
<keyword id="KW-1015">Disulfide bond</keyword>
<keyword id="KW-0676">Redox-active center</keyword>
<keyword id="KW-0862">Zinc</keyword>
<organism>
    <name type="scientific">Streptococcus pneumoniae (strain Hungary19A-6)</name>
    <dbReference type="NCBI Taxonomy" id="487214"/>
    <lineage>
        <taxon>Bacteria</taxon>
        <taxon>Bacillati</taxon>
        <taxon>Bacillota</taxon>
        <taxon>Bacilli</taxon>
        <taxon>Lactobacillales</taxon>
        <taxon>Streptococcaceae</taxon>
        <taxon>Streptococcus</taxon>
    </lineage>
</organism>
<dbReference type="EMBL" id="CP000936">
    <property type="protein sequence ID" value="ACA36086.1"/>
    <property type="molecule type" value="Genomic_DNA"/>
</dbReference>
<dbReference type="RefSeq" id="WP_000357847.1">
    <property type="nucleotide sequence ID" value="NC_010380.1"/>
</dbReference>
<dbReference type="SMR" id="B1I9Z8"/>
<dbReference type="KEGG" id="spv:SPH_2383"/>
<dbReference type="HOGENOM" id="CLU_054493_1_0_9"/>
<dbReference type="Proteomes" id="UP000002163">
    <property type="component" value="Chromosome"/>
</dbReference>
<dbReference type="GO" id="GO:0005737">
    <property type="term" value="C:cytoplasm"/>
    <property type="evidence" value="ECO:0007669"/>
    <property type="project" value="UniProtKB-SubCell"/>
</dbReference>
<dbReference type="GO" id="GO:0044183">
    <property type="term" value="F:protein folding chaperone"/>
    <property type="evidence" value="ECO:0007669"/>
    <property type="project" value="TreeGrafter"/>
</dbReference>
<dbReference type="GO" id="GO:0051082">
    <property type="term" value="F:unfolded protein binding"/>
    <property type="evidence" value="ECO:0007669"/>
    <property type="project" value="UniProtKB-UniRule"/>
</dbReference>
<dbReference type="GO" id="GO:0042026">
    <property type="term" value="P:protein refolding"/>
    <property type="evidence" value="ECO:0007669"/>
    <property type="project" value="TreeGrafter"/>
</dbReference>
<dbReference type="CDD" id="cd00498">
    <property type="entry name" value="Hsp33"/>
    <property type="match status" value="1"/>
</dbReference>
<dbReference type="Gene3D" id="3.55.30.10">
    <property type="entry name" value="Hsp33 domain"/>
    <property type="match status" value="1"/>
</dbReference>
<dbReference type="Gene3D" id="3.90.1280.10">
    <property type="entry name" value="HSP33 redox switch-like"/>
    <property type="match status" value="1"/>
</dbReference>
<dbReference type="HAMAP" id="MF_00117">
    <property type="entry name" value="HslO"/>
    <property type="match status" value="1"/>
</dbReference>
<dbReference type="InterPro" id="IPR000397">
    <property type="entry name" value="Heat_shock_Hsp33"/>
</dbReference>
<dbReference type="InterPro" id="IPR016154">
    <property type="entry name" value="Heat_shock_Hsp33_C"/>
</dbReference>
<dbReference type="InterPro" id="IPR016153">
    <property type="entry name" value="Heat_shock_Hsp33_N"/>
</dbReference>
<dbReference type="NCBIfam" id="NF001033">
    <property type="entry name" value="PRK00114.1"/>
    <property type="match status" value="1"/>
</dbReference>
<dbReference type="PANTHER" id="PTHR30111">
    <property type="entry name" value="33 KDA CHAPERONIN"/>
    <property type="match status" value="1"/>
</dbReference>
<dbReference type="PANTHER" id="PTHR30111:SF1">
    <property type="entry name" value="33 KDA CHAPERONIN"/>
    <property type="match status" value="1"/>
</dbReference>
<dbReference type="Pfam" id="PF01430">
    <property type="entry name" value="HSP33"/>
    <property type="match status" value="1"/>
</dbReference>
<dbReference type="PIRSF" id="PIRSF005261">
    <property type="entry name" value="Heat_shock_Hsp33"/>
    <property type="match status" value="1"/>
</dbReference>
<dbReference type="SUPFAM" id="SSF64397">
    <property type="entry name" value="Hsp33 domain"/>
    <property type="match status" value="1"/>
</dbReference>
<dbReference type="SUPFAM" id="SSF118352">
    <property type="entry name" value="HSP33 redox switch-like"/>
    <property type="match status" value="1"/>
</dbReference>
<accession>B1I9Z8</accession>
<name>HSLO_STRPI</name>
<proteinExistence type="inferred from homology"/>
<reference key="1">
    <citation type="journal article" date="2010" name="Genome Biol.">
        <title>Structure and dynamics of the pan-genome of Streptococcus pneumoniae and closely related species.</title>
        <authorList>
            <person name="Donati C."/>
            <person name="Hiller N.L."/>
            <person name="Tettelin H."/>
            <person name="Muzzi A."/>
            <person name="Croucher N.J."/>
            <person name="Angiuoli S.V."/>
            <person name="Oggioni M."/>
            <person name="Dunning Hotopp J.C."/>
            <person name="Hu F.Z."/>
            <person name="Riley D.R."/>
            <person name="Covacci A."/>
            <person name="Mitchell T.J."/>
            <person name="Bentley S.D."/>
            <person name="Kilian M."/>
            <person name="Ehrlich G.D."/>
            <person name="Rappuoli R."/>
            <person name="Moxon E.R."/>
            <person name="Masignani V."/>
        </authorList>
    </citation>
    <scope>NUCLEOTIDE SEQUENCE [LARGE SCALE GENOMIC DNA]</scope>
    <source>
        <strain>Hungary19A-6</strain>
    </source>
</reference>